<dbReference type="EMBL" id="CP000262">
    <property type="protein sequence ID" value="ABF38872.1"/>
    <property type="molecule type" value="Genomic_DNA"/>
</dbReference>
<dbReference type="SMR" id="Q1J489"/>
<dbReference type="KEGG" id="spi:MGAS10750_Spy1922"/>
<dbReference type="HOGENOM" id="CLU_002472_3_1_9"/>
<dbReference type="Proteomes" id="UP000002434">
    <property type="component" value="Chromosome"/>
</dbReference>
<dbReference type="GO" id="GO:0005829">
    <property type="term" value="C:cytosol"/>
    <property type="evidence" value="ECO:0007669"/>
    <property type="project" value="TreeGrafter"/>
</dbReference>
<dbReference type="GO" id="GO:0005524">
    <property type="term" value="F:ATP binding"/>
    <property type="evidence" value="ECO:0007669"/>
    <property type="project" value="UniProtKB-UniRule"/>
</dbReference>
<dbReference type="GO" id="GO:0140664">
    <property type="term" value="F:ATP-dependent DNA damage sensor activity"/>
    <property type="evidence" value="ECO:0007669"/>
    <property type="project" value="InterPro"/>
</dbReference>
<dbReference type="GO" id="GO:0003684">
    <property type="term" value="F:damaged DNA binding"/>
    <property type="evidence" value="ECO:0007669"/>
    <property type="project" value="UniProtKB-UniRule"/>
</dbReference>
<dbReference type="GO" id="GO:0030983">
    <property type="term" value="F:mismatched DNA binding"/>
    <property type="evidence" value="ECO:0007669"/>
    <property type="project" value="InterPro"/>
</dbReference>
<dbReference type="GO" id="GO:0006298">
    <property type="term" value="P:mismatch repair"/>
    <property type="evidence" value="ECO:0007669"/>
    <property type="project" value="UniProtKB-UniRule"/>
</dbReference>
<dbReference type="CDD" id="cd03284">
    <property type="entry name" value="ABC_MutS1"/>
    <property type="match status" value="1"/>
</dbReference>
<dbReference type="FunFam" id="1.10.1420.10:FF:000001">
    <property type="entry name" value="DNA mismatch repair protein MutS"/>
    <property type="match status" value="1"/>
</dbReference>
<dbReference type="FunFam" id="3.40.1170.10:FF:000001">
    <property type="entry name" value="DNA mismatch repair protein MutS"/>
    <property type="match status" value="1"/>
</dbReference>
<dbReference type="FunFam" id="3.40.50.300:FF:000896">
    <property type="entry name" value="DNA mismatch repair protein MutS"/>
    <property type="match status" value="1"/>
</dbReference>
<dbReference type="Gene3D" id="1.10.1420.10">
    <property type="match status" value="2"/>
</dbReference>
<dbReference type="Gene3D" id="3.40.1170.10">
    <property type="entry name" value="DNA repair protein MutS, domain I"/>
    <property type="match status" value="1"/>
</dbReference>
<dbReference type="Gene3D" id="3.30.420.110">
    <property type="entry name" value="MutS, connector domain"/>
    <property type="match status" value="1"/>
</dbReference>
<dbReference type="Gene3D" id="3.40.50.300">
    <property type="entry name" value="P-loop containing nucleotide triphosphate hydrolases"/>
    <property type="match status" value="1"/>
</dbReference>
<dbReference type="HAMAP" id="MF_00096">
    <property type="entry name" value="MutS"/>
    <property type="match status" value="1"/>
</dbReference>
<dbReference type="InterPro" id="IPR005748">
    <property type="entry name" value="DNA_mismatch_repair_MutS"/>
</dbReference>
<dbReference type="InterPro" id="IPR007695">
    <property type="entry name" value="DNA_mismatch_repair_MutS-lik_N"/>
</dbReference>
<dbReference type="InterPro" id="IPR017261">
    <property type="entry name" value="DNA_mismatch_repair_MutS/MSH"/>
</dbReference>
<dbReference type="InterPro" id="IPR000432">
    <property type="entry name" value="DNA_mismatch_repair_MutS_C"/>
</dbReference>
<dbReference type="InterPro" id="IPR007861">
    <property type="entry name" value="DNA_mismatch_repair_MutS_clamp"/>
</dbReference>
<dbReference type="InterPro" id="IPR007696">
    <property type="entry name" value="DNA_mismatch_repair_MutS_core"/>
</dbReference>
<dbReference type="InterPro" id="IPR016151">
    <property type="entry name" value="DNA_mismatch_repair_MutS_N"/>
</dbReference>
<dbReference type="InterPro" id="IPR036187">
    <property type="entry name" value="DNA_mismatch_repair_MutS_sf"/>
</dbReference>
<dbReference type="InterPro" id="IPR007860">
    <property type="entry name" value="DNA_mmatch_repair_MutS_con_dom"/>
</dbReference>
<dbReference type="InterPro" id="IPR045076">
    <property type="entry name" value="MutS"/>
</dbReference>
<dbReference type="InterPro" id="IPR036678">
    <property type="entry name" value="MutS_con_dom_sf"/>
</dbReference>
<dbReference type="InterPro" id="IPR027417">
    <property type="entry name" value="P-loop_NTPase"/>
</dbReference>
<dbReference type="NCBIfam" id="TIGR01070">
    <property type="entry name" value="mutS1"/>
    <property type="match status" value="1"/>
</dbReference>
<dbReference type="NCBIfam" id="NF003810">
    <property type="entry name" value="PRK05399.1"/>
    <property type="match status" value="1"/>
</dbReference>
<dbReference type="PANTHER" id="PTHR11361:SF34">
    <property type="entry name" value="DNA MISMATCH REPAIR PROTEIN MSH1, MITOCHONDRIAL"/>
    <property type="match status" value="1"/>
</dbReference>
<dbReference type="PANTHER" id="PTHR11361">
    <property type="entry name" value="DNA MISMATCH REPAIR PROTEIN MUTS FAMILY MEMBER"/>
    <property type="match status" value="1"/>
</dbReference>
<dbReference type="Pfam" id="PF01624">
    <property type="entry name" value="MutS_I"/>
    <property type="match status" value="1"/>
</dbReference>
<dbReference type="Pfam" id="PF05188">
    <property type="entry name" value="MutS_II"/>
    <property type="match status" value="1"/>
</dbReference>
<dbReference type="Pfam" id="PF05192">
    <property type="entry name" value="MutS_III"/>
    <property type="match status" value="1"/>
</dbReference>
<dbReference type="Pfam" id="PF05190">
    <property type="entry name" value="MutS_IV"/>
    <property type="match status" value="1"/>
</dbReference>
<dbReference type="Pfam" id="PF00488">
    <property type="entry name" value="MutS_V"/>
    <property type="match status" value="1"/>
</dbReference>
<dbReference type="PIRSF" id="PIRSF037677">
    <property type="entry name" value="DNA_mis_repair_Msh6"/>
    <property type="match status" value="1"/>
</dbReference>
<dbReference type="SMART" id="SM00534">
    <property type="entry name" value="MUTSac"/>
    <property type="match status" value="1"/>
</dbReference>
<dbReference type="SMART" id="SM00533">
    <property type="entry name" value="MUTSd"/>
    <property type="match status" value="1"/>
</dbReference>
<dbReference type="SUPFAM" id="SSF55271">
    <property type="entry name" value="DNA repair protein MutS, domain I"/>
    <property type="match status" value="1"/>
</dbReference>
<dbReference type="SUPFAM" id="SSF53150">
    <property type="entry name" value="DNA repair protein MutS, domain II"/>
    <property type="match status" value="1"/>
</dbReference>
<dbReference type="SUPFAM" id="SSF48334">
    <property type="entry name" value="DNA repair protein MutS, domain III"/>
    <property type="match status" value="1"/>
</dbReference>
<dbReference type="SUPFAM" id="SSF52540">
    <property type="entry name" value="P-loop containing nucleoside triphosphate hydrolases"/>
    <property type="match status" value="1"/>
</dbReference>
<dbReference type="PROSITE" id="PS00486">
    <property type="entry name" value="DNA_MISMATCH_REPAIR_2"/>
    <property type="match status" value="1"/>
</dbReference>
<proteinExistence type="inferred from homology"/>
<keyword id="KW-0067">ATP-binding</keyword>
<keyword id="KW-0227">DNA damage</keyword>
<keyword id="KW-0234">DNA repair</keyword>
<keyword id="KW-0238">DNA-binding</keyword>
<keyword id="KW-0547">Nucleotide-binding</keyword>
<accession>Q1J489</accession>
<name>MUTS_STRPF</name>
<gene>
    <name evidence="1" type="primary">mutS</name>
    <name type="ordered locus">MGAS10750_Spy1922</name>
</gene>
<evidence type="ECO:0000255" key="1">
    <source>
        <dbReference type="HAMAP-Rule" id="MF_00096"/>
    </source>
</evidence>
<sequence>MAKTNISPGMQQYLDIKKDYPDAFLLFRMGDFYELFYEDAVKAAQLLEIGLTSRNKNAENPIPMAGVPHHSAQQYIDVLIELGYKVAVAEQMEDPKQAVGVVKREVVQVITPGTVVDSAKPDSANNFLVAIDFDGCRYGLAYMDVSTGEFCVTDLADFTSVRSEIQNLKAKEVLLGFDLSEEEQTILVKQMNLLLSYEETVYEDKSLIDGQLTTVELTAAGKLLQYVHKTQMRELSHLQALVHYEIKDYLQMSYATKSSLDLVENARTNKKHGSLYWLLDETKTAMGMRLLRSWIDRPLVSKEAILERQEIIQVFLNAFIERTDLSNSLKGVYDIERLSSRVSFGKANPKDLLQLGHTLAQVPYIKAILESFNSAYVDKLVNDIDSLPELEYLIRTAIDPDAPATISEGSIIRNGFDERLDHYRKVMREGTGWIADIEAKERQASGINNLKIDYNKKDGYYFHVTNSNLSLVPDHFFRKATLKNSERYGTAELAKIEGQMLEAREESSSLEYDIFMCIRAQVETYINRLQKLAKILATVDVLQSLAVVAETNHYIRPQFNDNHVITIQEGRHAVVEKVMGVQEYIPNSISFDQQTSIQLITGPNMSGKSTYMRQLALTVIMAQMGSFVAADHVDLPLFDAIFTRIGAADDLISGQSTFMVEMMEANQAIKRASDNSLILFDELGRGTATYDGMALAQAIIEYIHDRVGAKTIFATHYHELTDLSTKLTSLVNVHVATLEKDGDVTFLHKIAEGPADKSYGIHVAKIAGLPKSLLKRADEVLTRLETQSRSTEIMSVPPQVESSSAVRQGQLSLFGDEEKAHEIRQALEAIDVMNMTPLQAMTTLYELKKLL</sequence>
<comment type="function">
    <text evidence="1">This protein is involved in the repair of mismatches in DNA. It is possible that it carries out the mismatch recognition step. This protein has a weak ATPase activity.</text>
</comment>
<comment type="similarity">
    <text evidence="1">Belongs to the DNA mismatch repair MutS family.</text>
</comment>
<protein>
    <recommendedName>
        <fullName evidence="1">DNA mismatch repair protein MutS</fullName>
    </recommendedName>
</protein>
<reference key="1">
    <citation type="journal article" date="2006" name="Proc. Natl. Acad. Sci. U.S.A.">
        <title>Molecular genetic anatomy of inter- and intraserotype variation in the human bacterial pathogen group A Streptococcus.</title>
        <authorList>
            <person name="Beres S.B."/>
            <person name="Richter E.W."/>
            <person name="Nagiec M.J."/>
            <person name="Sumby P."/>
            <person name="Porcella S.F."/>
            <person name="DeLeo F.R."/>
            <person name="Musser J.M."/>
        </authorList>
    </citation>
    <scope>NUCLEOTIDE SEQUENCE [LARGE SCALE GENOMIC DNA]</scope>
    <source>
        <strain>MGAS10750</strain>
    </source>
</reference>
<organism>
    <name type="scientific">Streptococcus pyogenes serotype M4 (strain MGAS10750)</name>
    <dbReference type="NCBI Taxonomy" id="370554"/>
    <lineage>
        <taxon>Bacteria</taxon>
        <taxon>Bacillati</taxon>
        <taxon>Bacillota</taxon>
        <taxon>Bacilli</taxon>
        <taxon>Lactobacillales</taxon>
        <taxon>Streptococcaceae</taxon>
        <taxon>Streptococcus</taxon>
    </lineage>
</organism>
<feature type="chain" id="PRO_1000008110" description="DNA mismatch repair protein MutS">
    <location>
        <begin position="1"/>
        <end position="851"/>
    </location>
</feature>
<feature type="binding site" evidence="1">
    <location>
        <begin position="602"/>
        <end position="609"/>
    </location>
    <ligand>
        <name>ATP</name>
        <dbReference type="ChEBI" id="CHEBI:30616"/>
    </ligand>
</feature>